<comment type="catalytic activity">
    <reaction evidence="1">
        <text>adenine + H2O + H(+) = hypoxanthine + NH4(+)</text>
        <dbReference type="Rhea" id="RHEA:23688"/>
        <dbReference type="ChEBI" id="CHEBI:15377"/>
        <dbReference type="ChEBI" id="CHEBI:15378"/>
        <dbReference type="ChEBI" id="CHEBI:16708"/>
        <dbReference type="ChEBI" id="CHEBI:17368"/>
        <dbReference type="ChEBI" id="CHEBI:28938"/>
        <dbReference type="EC" id="3.5.4.2"/>
    </reaction>
</comment>
<comment type="cofactor">
    <cofactor evidence="1">
        <name>Mn(2+)</name>
        <dbReference type="ChEBI" id="CHEBI:29035"/>
    </cofactor>
</comment>
<comment type="similarity">
    <text evidence="1">Belongs to the metallo-dependent hydrolases superfamily. Adenine deaminase family.</text>
</comment>
<gene>
    <name evidence="1" type="primary">ade</name>
    <name type="synonym">adeC</name>
    <name type="ordered locus">MA_2310</name>
</gene>
<organism>
    <name type="scientific">Methanosarcina acetivorans (strain ATCC 35395 / DSM 2834 / JCM 12185 / C2A)</name>
    <dbReference type="NCBI Taxonomy" id="188937"/>
    <lineage>
        <taxon>Archaea</taxon>
        <taxon>Methanobacteriati</taxon>
        <taxon>Methanobacteriota</taxon>
        <taxon>Stenosarchaea group</taxon>
        <taxon>Methanomicrobia</taxon>
        <taxon>Methanosarcinales</taxon>
        <taxon>Methanosarcinaceae</taxon>
        <taxon>Methanosarcina</taxon>
    </lineage>
</organism>
<sequence>MKKYLGIIVDAVSRRQFKGEITVENGKILRVEEKEHDHERYILPGLVDAHVHIESSMTVPSVFARMAVAKGTVAVVSDPHEIANVMGEEGIDFMLGDSKRSPLKVFFGVPSCVPATPFESAGSVLDAEAVDRLLAREDLYYLSEMMNFPGVVLGFPDVMAKLESAKKCGKVIDGHAPGLRGADLETYIGVGISTDHESFTYEEAVEKIKLGMKILIREGSSARNFETLYSLIDEYPEAVMLCTDDSHPDTLIYEGHIDKLIRRGQEKGLDIFNLIRAAVINPVEHYGLNVGLLREGDPADFITVDDLKSFNVLSTFIDGECVYENGKVLFPMKKVPAKNVFNRNKISIDAAKLAVPAEETGDRKEGMRKIRVIVARDGELVTGQELAFPKVENGNMVSDPEKDILKMVVLSRYADDPVQIGFIKNIGLKEGAIASSIAHDSHNIIAVGATDKDIVEAVNRLVENKGGIVVGTAENLLDLPLEVAGLMSTLDGVEVASRYRLLNEEARKLGTSLESPFMTLAFMSLLVIPELKLGDKGLFDVTKFEFVELFAEE</sequence>
<keyword id="KW-0378">Hydrolase</keyword>
<keyword id="KW-0464">Manganese</keyword>
<keyword id="KW-1185">Reference proteome</keyword>
<accession>Q8TNH5</accession>
<feature type="chain" id="PRO_0000142439" description="Adenine deaminase">
    <location>
        <begin position="1"/>
        <end position="553"/>
    </location>
</feature>
<reference key="1">
    <citation type="journal article" date="2002" name="Genome Res.">
        <title>The genome of Methanosarcina acetivorans reveals extensive metabolic and physiological diversity.</title>
        <authorList>
            <person name="Galagan J.E."/>
            <person name="Nusbaum C."/>
            <person name="Roy A."/>
            <person name="Endrizzi M.G."/>
            <person name="Macdonald P."/>
            <person name="FitzHugh W."/>
            <person name="Calvo S."/>
            <person name="Engels R."/>
            <person name="Smirnov S."/>
            <person name="Atnoor D."/>
            <person name="Brown A."/>
            <person name="Allen N."/>
            <person name="Naylor J."/>
            <person name="Stange-Thomann N."/>
            <person name="DeArellano K."/>
            <person name="Johnson R."/>
            <person name="Linton L."/>
            <person name="McEwan P."/>
            <person name="McKernan K."/>
            <person name="Talamas J."/>
            <person name="Tirrell A."/>
            <person name="Ye W."/>
            <person name="Zimmer A."/>
            <person name="Barber R.D."/>
            <person name="Cann I."/>
            <person name="Graham D.E."/>
            <person name="Grahame D.A."/>
            <person name="Guss A.M."/>
            <person name="Hedderich R."/>
            <person name="Ingram-Smith C."/>
            <person name="Kuettner H.C."/>
            <person name="Krzycki J.A."/>
            <person name="Leigh J.A."/>
            <person name="Li W."/>
            <person name="Liu J."/>
            <person name="Mukhopadhyay B."/>
            <person name="Reeve J.N."/>
            <person name="Smith K."/>
            <person name="Springer T.A."/>
            <person name="Umayam L.A."/>
            <person name="White O."/>
            <person name="White R.H."/>
            <person name="de Macario E.C."/>
            <person name="Ferry J.G."/>
            <person name="Jarrell K.F."/>
            <person name="Jing H."/>
            <person name="Macario A.J.L."/>
            <person name="Paulsen I.T."/>
            <person name="Pritchett M."/>
            <person name="Sowers K.R."/>
            <person name="Swanson R.V."/>
            <person name="Zinder S.H."/>
            <person name="Lander E."/>
            <person name="Metcalf W.W."/>
            <person name="Birren B."/>
        </authorList>
    </citation>
    <scope>NUCLEOTIDE SEQUENCE [LARGE SCALE GENOMIC DNA]</scope>
    <source>
        <strain>ATCC 35395 / DSM 2834 / JCM 12185 / C2A</strain>
    </source>
</reference>
<dbReference type="EC" id="3.5.4.2" evidence="1"/>
<dbReference type="EMBL" id="AE010299">
    <property type="protein sequence ID" value="AAM05703.1"/>
    <property type="molecule type" value="Genomic_DNA"/>
</dbReference>
<dbReference type="RefSeq" id="WP_011022289.1">
    <property type="nucleotide sequence ID" value="NC_003552.1"/>
</dbReference>
<dbReference type="SMR" id="Q8TNH5"/>
<dbReference type="FunCoup" id="Q8TNH5">
    <property type="interactions" value="20"/>
</dbReference>
<dbReference type="STRING" id="188937.MA_2310"/>
<dbReference type="EnsemblBacteria" id="AAM05703">
    <property type="protein sequence ID" value="AAM05703"/>
    <property type="gene ID" value="MA_2310"/>
</dbReference>
<dbReference type="GeneID" id="1474199"/>
<dbReference type="KEGG" id="mac:MA_2310"/>
<dbReference type="HOGENOM" id="CLU_027935_0_0_2"/>
<dbReference type="InParanoid" id="Q8TNH5"/>
<dbReference type="OrthoDB" id="24954at2157"/>
<dbReference type="PhylomeDB" id="Q8TNH5"/>
<dbReference type="Proteomes" id="UP000002487">
    <property type="component" value="Chromosome"/>
</dbReference>
<dbReference type="GO" id="GO:0000034">
    <property type="term" value="F:adenine deaminase activity"/>
    <property type="evidence" value="ECO:0000318"/>
    <property type="project" value="GO_Central"/>
</dbReference>
<dbReference type="GO" id="GO:0006146">
    <property type="term" value="P:adenine catabolic process"/>
    <property type="evidence" value="ECO:0007669"/>
    <property type="project" value="InterPro"/>
</dbReference>
<dbReference type="CDD" id="cd01295">
    <property type="entry name" value="AdeC"/>
    <property type="match status" value="1"/>
</dbReference>
<dbReference type="FunFam" id="3.20.20.140:FF:000016">
    <property type="entry name" value="Adenine deaminase"/>
    <property type="match status" value="1"/>
</dbReference>
<dbReference type="Gene3D" id="3.20.20.140">
    <property type="entry name" value="Metal-dependent hydrolases"/>
    <property type="match status" value="1"/>
</dbReference>
<dbReference type="Gene3D" id="2.30.40.10">
    <property type="entry name" value="Urease, subunit C, domain 1"/>
    <property type="match status" value="1"/>
</dbReference>
<dbReference type="HAMAP" id="MF_01518">
    <property type="entry name" value="Adenine_deamin"/>
    <property type="match status" value="1"/>
</dbReference>
<dbReference type="InterPro" id="IPR006679">
    <property type="entry name" value="Adenine_deam"/>
</dbReference>
<dbReference type="InterPro" id="IPR026912">
    <property type="entry name" value="Adenine_deam_C"/>
</dbReference>
<dbReference type="InterPro" id="IPR006680">
    <property type="entry name" value="Amidohydro-rel"/>
</dbReference>
<dbReference type="InterPro" id="IPR011059">
    <property type="entry name" value="Metal-dep_hydrolase_composite"/>
</dbReference>
<dbReference type="InterPro" id="IPR032466">
    <property type="entry name" value="Metal_Hydrolase"/>
</dbReference>
<dbReference type="NCBIfam" id="TIGR01178">
    <property type="entry name" value="ade"/>
    <property type="match status" value="1"/>
</dbReference>
<dbReference type="PANTHER" id="PTHR11113:SF2">
    <property type="entry name" value="ADENINE DEAMINASE"/>
    <property type="match status" value="1"/>
</dbReference>
<dbReference type="PANTHER" id="PTHR11113">
    <property type="entry name" value="N-ACETYLGLUCOSAMINE-6-PHOSPHATE DEACETYLASE"/>
    <property type="match status" value="1"/>
</dbReference>
<dbReference type="Pfam" id="PF13382">
    <property type="entry name" value="Adenine_deam_C"/>
    <property type="match status" value="1"/>
</dbReference>
<dbReference type="Pfam" id="PF01979">
    <property type="entry name" value="Amidohydro_1"/>
    <property type="match status" value="1"/>
</dbReference>
<dbReference type="SUPFAM" id="SSF51338">
    <property type="entry name" value="Composite domain of metallo-dependent hydrolases"/>
    <property type="match status" value="1"/>
</dbReference>
<dbReference type="SUPFAM" id="SSF51556">
    <property type="entry name" value="Metallo-dependent hydrolases"/>
    <property type="match status" value="1"/>
</dbReference>
<proteinExistence type="inferred from homology"/>
<evidence type="ECO:0000255" key="1">
    <source>
        <dbReference type="HAMAP-Rule" id="MF_01518"/>
    </source>
</evidence>
<protein>
    <recommendedName>
        <fullName evidence="1">Adenine deaminase</fullName>
        <shortName evidence="1">Adenase</shortName>
        <shortName evidence="1">Adenine aminase</shortName>
        <ecNumber evidence="1">3.5.4.2</ecNumber>
    </recommendedName>
</protein>
<name>ADEC_METAC</name>